<comment type="function">
    <text evidence="1">Catalyzes the hydrolysis of glutamine to glutamate and ammonia as part of the biosynthesis of pyridoxal 5'-phosphate. The resulting ammonia molecule is channeled to the active site of PdxS.</text>
</comment>
<comment type="catalytic activity">
    <reaction evidence="1">
        <text>aldehydo-D-ribose 5-phosphate + D-glyceraldehyde 3-phosphate + L-glutamine = pyridoxal 5'-phosphate + L-glutamate + phosphate + 3 H2O + H(+)</text>
        <dbReference type="Rhea" id="RHEA:31507"/>
        <dbReference type="ChEBI" id="CHEBI:15377"/>
        <dbReference type="ChEBI" id="CHEBI:15378"/>
        <dbReference type="ChEBI" id="CHEBI:29985"/>
        <dbReference type="ChEBI" id="CHEBI:43474"/>
        <dbReference type="ChEBI" id="CHEBI:58273"/>
        <dbReference type="ChEBI" id="CHEBI:58359"/>
        <dbReference type="ChEBI" id="CHEBI:59776"/>
        <dbReference type="ChEBI" id="CHEBI:597326"/>
        <dbReference type="EC" id="4.3.3.6"/>
    </reaction>
</comment>
<comment type="catalytic activity">
    <reaction evidence="1">
        <text>L-glutamine + H2O = L-glutamate + NH4(+)</text>
        <dbReference type="Rhea" id="RHEA:15889"/>
        <dbReference type="ChEBI" id="CHEBI:15377"/>
        <dbReference type="ChEBI" id="CHEBI:28938"/>
        <dbReference type="ChEBI" id="CHEBI:29985"/>
        <dbReference type="ChEBI" id="CHEBI:58359"/>
        <dbReference type="EC" id="3.5.1.2"/>
    </reaction>
</comment>
<comment type="pathway">
    <text evidence="1">Cofactor biosynthesis; pyridoxal 5'-phosphate biosynthesis.</text>
</comment>
<comment type="subunit">
    <text evidence="1">In the presence of PdxS, forms a dodecamer of heterodimers. Only shows activity in the heterodimer.</text>
</comment>
<comment type="similarity">
    <text evidence="1">Belongs to the glutaminase PdxT/SNO family.</text>
</comment>
<feature type="chain" id="PRO_0000135626" description="Pyridoxal 5'-phosphate synthase subunit PdxT">
    <location>
        <begin position="1"/>
        <end position="196"/>
    </location>
</feature>
<feature type="active site" description="Nucleophile" evidence="1">
    <location>
        <position position="79"/>
    </location>
</feature>
<feature type="active site" description="Charge relay system" evidence="1">
    <location>
        <position position="170"/>
    </location>
</feature>
<feature type="active site" description="Charge relay system" evidence="1">
    <location>
        <position position="172"/>
    </location>
</feature>
<feature type="binding site" evidence="1">
    <location>
        <begin position="47"/>
        <end position="49"/>
    </location>
    <ligand>
        <name>L-glutamine</name>
        <dbReference type="ChEBI" id="CHEBI:58359"/>
    </ligand>
</feature>
<feature type="binding site" evidence="1">
    <location>
        <position position="106"/>
    </location>
    <ligand>
        <name>L-glutamine</name>
        <dbReference type="ChEBI" id="CHEBI:58359"/>
    </ligand>
</feature>
<feature type="binding site" evidence="1">
    <location>
        <begin position="134"/>
        <end position="135"/>
    </location>
    <ligand>
        <name>L-glutamine</name>
        <dbReference type="ChEBI" id="CHEBI:58359"/>
    </ligand>
</feature>
<sequence length="196" mass="21459">MVKIGVLGLQGAVREHVKSVEASGAEAVVVKRIEQLEEIDGLILPGGESTTMRRLIDKYDFMEPLRTFAKSGKPMFGTCAGMILLAKTLIGYDEAHIGAMDITVERNAFGRQKDSFEAALSIKGVGEDFVGVFIRAPYVVNVADDVEVLSTHGDRMVAVRQGPFLAASFHPELTDDHRVTAYFVEMVKEAKMKKVV</sequence>
<proteinExistence type="inferred from homology"/>
<gene>
    <name evidence="1" type="primary">pdxT</name>
    <name type="ordered locus">BCE33L0012</name>
</gene>
<name>PDXT_BACCZ</name>
<evidence type="ECO:0000255" key="1">
    <source>
        <dbReference type="HAMAP-Rule" id="MF_01615"/>
    </source>
</evidence>
<accession>Q63HF7</accession>
<organism>
    <name type="scientific">Bacillus cereus (strain ZK / E33L)</name>
    <dbReference type="NCBI Taxonomy" id="288681"/>
    <lineage>
        <taxon>Bacteria</taxon>
        <taxon>Bacillati</taxon>
        <taxon>Bacillota</taxon>
        <taxon>Bacilli</taxon>
        <taxon>Bacillales</taxon>
        <taxon>Bacillaceae</taxon>
        <taxon>Bacillus</taxon>
        <taxon>Bacillus cereus group</taxon>
    </lineage>
</organism>
<keyword id="KW-0315">Glutamine amidotransferase</keyword>
<keyword id="KW-0378">Hydrolase</keyword>
<keyword id="KW-0456">Lyase</keyword>
<keyword id="KW-0663">Pyridoxal phosphate</keyword>
<reference key="1">
    <citation type="journal article" date="2006" name="J. Bacteriol.">
        <title>Pathogenomic sequence analysis of Bacillus cereus and Bacillus thuringiensis isolates closely related to Bacillus anthracis.</title>
        <authorList>
            <person name="Han C.S."/>
            <person name="Xie G."/>
            <person name="Challacombe J.F."/>
            <person name="Altherr M.R."/>
            <person name="Bhotika S.S."/>
            <person name="Bruce D."/>
            <person name="Campbell C.S."/>
            <person name="Campbell M.L."/>
            <person name="Chen J."/>
            <person name="Chertkov O."/>
            <person name="Cleland C."/>
            <person name="Dimitrijevic M."/>
            <person name="Doggett N.A."/>
            <person name="Fawcett J.J."/>
            <person name="Glavina T."/>
            <person name="Goodwin L.A."/>
            <person name="Hill K.K."/>
            <person name="Hitchcock P."/>
            <person name="Jackson P.J."/>
            <person name="Keim P."/>
            <person name="Kewalramani A.R."/>
            <person name="Longmire J."/>
            <person name="Lucas S."/>
            <person name="Malfatti S."/>
            <person name="McMurry K."/>
            <person name="Meincke L.J."/>
            <person name="Misra M."/>
            <person name="Moseman B.L."/>
            <person name="Mundt M."/>
            <person name="Munk A.C."/>
            <person name="Okinaka R.T."/>
            <person name="Parson-Quintana B."/>
            <person name="Reilly L.P."/>
            <person name="Richardson P."/>
            <person name="Robinson D.L."/>
            <person name="Rubin E."/>
            <person name="Saunders E."/>
            <person name="Tapia R."/>
            <person name="Tesmer J.G."/>
            <person name="Thayer N."/>
            <person name="Thompson L.S."/>
            <person name="Tice H."/>
            <person name="Ticknor L.O."/>
            <person name="Wills P.L."/>
            <person name="Brettin T.S."/>
            <person name="Gilna P."/>
        </authorList>
    </citation>
    <scope>NUCLEOTIDE SEQUENCE [LARGE SCALE GENOMIC DNA]</scope>
    <source>
        <strain>ZK / E33L</strain>
    </source>
</reference>
<dbReference type="EC" id="4.3.3.6" evidence="1"/>
<dbReference type="EC" id="3.5.1.2" evidence="1"/>
<dbReference type="EMBL" id="CP000001">
    <property type="protein sequence ID" value="AAU20217.1"/>
    <property type="molecule type" value="Genomic_DNA"/>
</dbReference>
<dbReference type="RefSeq" id="WP_000238800.1">
    <property type="nucleotide sequence ID" value="NZ_CP009968.1"/>
</dbReference>
<dbReference type="SMR" id="Q63HF7"/>
<dbReference type="KEGG" id="bcz:BCE33L0012"/>
<dbReference type="PATRIC" id="fig|288681.22.peg.144"/>
<dbReference type="UniPathway" id="UPA00245"/>
<dbReference type="Proteomes" id="UP000002612">
    <property type="component" value="Chromosome"/>
</dbReference>
<dbReference type="GO" id="GO:0005829">
    <property type="term" value="C:cytosol"/>
    <property type="evidence" value="ECO:0007669"/>
    <property type="project" value="TreeGrafter"/>
</dbReference>
<dbReference type="GO" id="GO:1903600">
    <property type="term" value="C:glutaminase complex"/>
    <property type="evidence" value="ECO:0007669"/>
    <property type="project" value="TreeGrafter"/>
</dbReference>
<dbReference type="GO" id="GO:0004359">
    <property type="term" value="F:glutaminase activity"/>
    <property type="evidence" value="ECO:0007669"/>
    <property type="project" value="UniProtKB-UniRule"/>
</dbReference>
<dbReference type="GO" id="GO:0036381">
    <property type="term" value="F:pyridoxal 5'-phosphate synthase (glutamine hydrolysing) activity"/>
    <property type="evidence" value="ECO:0007669"/>
    <property type="project" value="UniProtKB-UniRule"/>
</dbReference>
<dbReference type="GO" id="GO:0006543">
    <property type="term" value="P:glutamine catabolic process"/>
    <property type="evidence" value="ECO:0007669"/>
    <property type="project" value="UniProtKB-UniRule"/>
</dbReference>
<dbReference type="GO" id="GO:0042823">
    <property type="term" value="P:pyridoxal phosphate biosynthetic process"/>
    <property type="evidence" value="ECO:0007669"/>
    <property type="project" value="UniProtKB-UniRule"/>
</dbReference>
<dbReference type="GO" id="GO:0008614">
    <property type="term" value="P:pyridoxine metabolic process"/>
    <property type="evidence" value="ECO:0007669"/>
    <property type="project" value="TreeGrafter"/>
</dbReference>
<dbReference type="CDD" id="cd01749">
    <property type="entry name" value="GATase1_PB"/>
    <property type="match status" value="1"/>
</dbReference>
<dbReference type="FunFam" id="3.40.50.880:FF:000010">
    <property type="entry name" value="uncharacterized protein LOC100176842 isoform X2"/>
    <property type="match status" value="1"/>
</dbReference>
<dbReference type="Gene3D" id="3.40.50.880">
    <property type="match status" value="1"/>
</dbReference>
<dbReference type="HAMAP" id="MF_01615">
    <property type="entry name" value="PdxT"/>
    <property type="match status" value="1"/>
</dbReference>
<dbReference type="InterPro" id="IPR029062">
    <property type="entry name" value="Class_I_gatase-like"/>
</dbReference>
<dbReference type="InterPro" id="IPR002161">
    <property type="entry name" value="PdxT/SNO"/>
</dbReference>
<dbReference type="InterPro" id="IPR021196">
    <property type="entry name" value="PdxT/SNO_CS"/>
</dbReference>
<dbReference type="NCBIfam" id="TIGR03800">
    <property type="entry name" value="PLP_synth_Pdx2"/>
    <property type="match status" value="1"/>
</dbReference>
<dbReference type="PANTHER" id="PTHR31559">
    <property type="entry name" value="PYRIDOXAL 5'-PHOSPHATE SYNTHASE SUBUNIT SNO"/>
    <property type="match status" value="1"/>
</dbReference>
<dbReference type="PANTHER" id="PTHR31559:SF0">
    <property type="entry name" value="PYRIDOXAL 5'-PHOSPHATE SYNTHASE SUBUNIT SNO1-RELATED"/>
    <property type="match status" value="1"/>
</dbReference>
<dbReference type="Pfam" id="PF01174">
    <property type="entry name" value="SNO"/>
    <property type="match status" value="1"/>
</dbReference>
<dbReference type="PIRSF" id="PIRSF005639">
    <property type="entry name" value="Glut_amidoT_SNO"/>
    <property type="match status" value="1"/>
</dbReference>
<dbReference type="SUPFAM" id="SSF52317">
    <property type="entry name" value="Class I glutamine amidotransferase-like"/>
    <property type="match status" value="1"/>
</dbReference>
<dbReference type="PROSITE" id="PS01236">
    <property type="entry name" value="PDXT_SNO_1"/>
    <property type="match status" value="1"/>
</dbReference>
<dbReference type="PROSITE" id="PS51130">
    <property type="entry name" value="PDXT_SNO_2"/>
    <property type="match status" value="1"/>
</dbReference>
<protein>
    <recommendedName>
        <fullName evidence="1">Pyridoxal 5'-phosphate synthase subunit PdxT</fullName>
        <ecNumber evidence="1">4.3.3.6</ecNumber>
    </recommendedName>
    <alternativeName>
        <fullName evidence="1">Pdx2</fullName>
    </alternativeName>
    <alternativeName>
        <fullName evidence="1">Pyridoxal 5'-phosphate synthase glutaminase subunit</fullName>
        <ecNumber evidence="1">3.5.1.2</ecNumber>
    </alternativeName>
</protein>